<dbReference type="EC" id="6.1.1.17" evidence="1"/>
<dbReference type="EMBL" id="CP000230">
    <property type="protein sequence ID" value="ABC21492.1"/>
    <property type="molecule type" value="Genomic_DNA"/>
</dbReference>
<dbReference type="RefSeq" id="YP_425779.1">
    <property type="nucleotide sequence ID" value="NC_007643.1"/>
</dbReference>
<dbReference type="SMR" id="Q2RWK3"/>
<dbReference type="STRING" id="269796.Rru_A0688"/>
<dbReference type="EnsemblBacteria" id="ABC21492">
    <property type="protein sequence ID" value="ABC21492"/>
    <property type="gene ID" value="Rru_A0688"/>
</dbReference>
<dbReference type="KEGG" id="rru:Rru_A0688"/>
<dbReference type="PATRIC" id="fig|269796.9.peg.741"/>
<dbReference type="eggNOG" id="COG0008">
    <property type="taxonomic scope" value="Bacteria"/>
</dbReference>
<dbReference type="HOGENOM" id="CLU_015768_6_1_5"/>
<dbReference type="PhylomeDB" id="Q2RWK3"/>
<dbReference type="Proteomes" id="UP000001929">
    <property type="component" value="Chromosome"/>
</dbReference>
<dbReference type="GO" id="GO:0005737">
    <property type="term" value="C:cytoplasm"/>
    <property type="evidence" value="ECO:0007669"/>
    <property type="project" value="UniProtKB-SubCell"/>
</dbReference>
<dbReference type="GO" id="GO:0005524">
    <property type="term" value="F:ATP binding"/>
    <property type="evidence" value="ECO:0007669"/>
    <property type="project" value="UniProtKB-UniRule"/>
</dbReference>
<dbReference type="GO" id="GO:0004818">
    <property type="term" value="F:glutamate-tRNA ligase activity"/>
    <property type="evidence" value="ECO:0007669"/>
    <property type="project" value="UniProtKB-UniRule"/>
</dbReference>
<dbReference type="GO" id="GO:0000049">
    <property type="term" value="F:tRNA binding"/>
    <property type="evidence" value="ECO:0007669"/>
    <property type="project" value="InterPro"/>
</dbReference>
<dbReference type="GO" id="GO:0006424">
    <property type="term" value="P:glutamyl-tRNA aminoacylation"/>
    <property type="evidence" value="ECO:0007669"/>
    <property type="project" value="UniProtKB-UniRule"/>
</dbReference>
<dbReference type="Gene3D" id="1.10.10.350">
    <property type="match status" value="1"/>
</dbReference>
<dbReference type="Gene3D" id="3.40.50.620">
    <property type="entry name" value="HUPs"/>
    <property type="match status" value="1"/>
</dbReference>
<dbReference type="HAMAP" id="MF_00022">
    <property type="entry name" value="Glu_tRNA_synth_type1"/>
    <property type="match status" value="1"/>
</dbReference>
<dbReference type="InterPro" id="IPR045462">
    <property type="entry name" value="aa-tRNA-synth_I_cd-bd"/>
</dbReference>
<dbReference type="InterPro" id="IPR020751">
    <property type="entry name" value="aa-tRNA-synth_I_codon-bd_sub2"/>
</dbReference>
<dbReference type="InterPro" id="IPR001412">
    <property type="entry name" value="aa-tRNA-synth_I_CS"/>
</dbReference>
<dbReference type="InterPro" id="IPR008925">
    <property type="entry name" value="aa_tRNA-synth_I_cd-bd_sf"/>
</dbReference>
<dbReference type="InterPro" id="IPR004527">
    <property type="entry name" value="Glu-tRNA-ligase_bac/mito"/>
</dbReference>
<dbReference type="InterPro" id="IPR000924">
    <property type="entry name" value="Glu/Gln-tRNA-synth"/>
</dbReference>
<dbReference type="InterPro" id="IPR020058">
    <property type="entry name" value="Glu/Gln-tRNA-synth_Ib_cat-dom"/>
</dbReference>
<dbReference type="InterPro" id="IPR049940">
    <property type="entry name" value="GluQ/Sye"/>
</dbReference>
<dbReference type="InterPro" id="IPR014729">
    <property type="entry name" value="Rossmann-like_a/b/a_fold"/>
</dbReference>
<dbReference type="NCBIfam" id="TIGR00464">
    <property type="entry name" value="gltX_bact"/>
    <property type="match status" value="1"/>
</dbReference>
<dbReference type="PANTHER" id="PTHR43311">
    <property type="entry name" value="GLUTAMATE--TRNA LIGASE"/>
    <property type="match status" value="1"/>
</dbReference>
<dbReference type="PANTHER" id="PTHR43311:SF2">
    <property type="entry name" value="GLUTAMATE--TRNA LIGASE, MITOCHONDRIAL-RELATED"/>
    <property type="match status" value="1"/>
</dbReference>
<dbReference type="Pfam" id="PF19269">
    <property type="entry name" value="Anticodon_2"/>
    <property type="match status" value="1"/>
</dbReference>
<dbReference type="Pfam" id="PF00749">
    <property type="entry name" value="tRNA-synt_1c"/>
    <property type="match status" value="1"/>
</dbReference>
<dbReference type="PRINTS" id="PR00987">
    <property type="entry name" value="TRNASYNTHGLU"/>
</dbReference>
<dbReference type="SUPFAM" id="SSF48163">
    <property type="entry name" value="An anticodon-binding domain of class I aminoacyl-tRNA synthetases"/>
    <property type="match status" value="1"/>
</dbReference>
<dbReference type="SUPFAM" id="SSF52374">
    <property type="entry name" value="Nucleotidylyl transferase"/>
    <property type="match status" value="1"/>
</dbReference>
<dbReference type="PROSITE" id="PS00178">
    <property type="entry name" value="AA_TRNA_LIGASE_I"/>
    <property type="match status" value="1"/>
</dbReference>
<comment type="function">
    <text evidence="1">Catalyzes the attachment of glutamate to tRNA(Glu) in a two-step reaction: glutamate is first activated by ATP to form Glu-AMP and then transferred to the acceptor end of tRNA(Glu).</text>
</comment>
<comment type="catalytic activity">
    <reaction evidence="1">
        <text>tRNA(Glu) + L-glutamate + ATP = L-glutamyl-tRNA(Glu) + AMP + diphosphate</text>
        <dbReference type="Rhea" id="RHEA:23540"/>
        <dbReference type="Rhea" id="RHEA-COMP:9663"/>
        <dbReference type="Rhea" id="RHEA-COMP:9680"/>
        <dbReference type="ChEBI" id="CHEBI:29985"/>
        <dbReference type="ChEBI" id="CHEBI:30616"/>
        <dbReference type="ChEBI" id="CHEBI:33019"/>
        <dbReference type="ChEBI" id="CHEBI:78442"/>
        <dbReference type="ChEBI" id="CHEBI:78520"/>
        <dbReference type="ChEBI" id="CHEBI:456215"/>
        <dbReference type="EC" id="6.1.1.17"/>
    </reaction>
</comment>
<comment type="subunit">
    <text evidence="1">Monomer.</text>
</comment>
<comment type="subcellular location">
    <subcellularLocation>
        <location evidence="1">Cytoplasm</location>
    </subcellularLocation>
</comment>
<comment type="similarity">
    <text evidence="1">Belongs to the class-I aminoacyl-tRNA synthetase family. Glutamate--tRNA ligase type 1 subfamily.</text>
</comment>
<protein>
    <recommendedName>
        <fullName evidence="1">Glutamate--tRNA ligase 1</fullName>
        <ecNumber evidence="1">6.1.1.17</ecNumber>
    </recommendedName>
    <alternativeName>
        <fullName evidence="1">Glutamyl-tRNA synthetase 1</fullName>
        <shortName evidence="1">GluRS 1</shortName>
    </alternativeName>
</protein>
<gene>
    <name evidence="1" type="primary">gltX1</name>
    <name type="ordered locus">Rru_A0688</name>
</gene>
<name>SYE1_RHORT</name>
<accession>Q2RWK3</accession>
<evidence type="ECO:0000255" key="1">
    <source>
        <dbReference type="HAMAP-Rule" id="MF_00022"/>
    </source>
</evidence>
<feature type="chain" id="PRO_0000367751" description="Glutamate--tRNA ligase 1">
    <location>
        <begin position="1"/>
        <end position="444"/>
    </location>
</feature>
<feature type="short sequence motif" description="'HIGH' region" evidence="1">
    <location>
        <begin position="10"/>
        <end position="20"/>
    </location>
</feature>
<feature type="short sequence motif" description="'KMSKS' region" evidence="1">
    <location>
        <begin position="241"/>
        <end position="245"/>
    </location>
</feature>
<feature type="binding site" evidence="1">
    <location>
        <position position="244"/>
    </location>
    <ligand>
        <name>ATP</name>
        <dbReference type="ChEBI" id="CHEBI:30616"/>
    </ligand>
</feature>
<organism>
    <name type="scientific">Rhodospirillum rubrum (strain ATCC 11170 / ATH 1.1.1 / DSM 467 / LMG 4362 / NCIMB 8255 / S1)</name>
    <dbReference type="NCBI Taxonomy" id="269796"/>
    <lineage>
        <taxon>Bacteria</taxon>
        <taxon>Pseudomonadati</taxon>
        <taxon>Pseudomonadota</taxon>
        <taxon>Alphaproteobacteria</taxon>
        <taxon>Rhodospirillales</taxon>
        <taxon>Rhodospirillaceae</taxon>
        <taxon>Rhodospirillum</taxon>
    </lineage>
</organism>
<proteinExistence type="inferred from homology"/>
<keyword id="KW-0030">Aminoacyl-tRNA synthetase</keyword>
<keyword id="KW-0067">ATP-binding</keyword>
<keyword id="KW-0963">Cytoplasm</keyword>
<keyword id="KW-0436">Ligase</keyword>
<keyword id="KW-0547">Nucleotide-binding</keyword>
<keyword id="KW-0648">Protein biosynthesis</keyword>
<keyword id="KW-1185">Reference proteome</keyword>
<reference key="1">
    <citation type="journal article" date="2011" name="Stand. Genomic Sci.">
        <title>Complete genome sequence of Rhodospirillum rubrum type strain (S1).</title>
        <authorList>
            <person name="Munk A.C."/>
            <person name="Copeland A."/>
            <person name="Lucas S."/>
            <person name="Lapidus A."/>
            <person name="Del Rio T.G."/>
            <person name="Barry K."/>
            <person name="Detter J.C."/>
            <person name="Hammon N."/>
            <person name="Israni S."/>
            <person name="Pitluck S."/>
            <person name="Brettin T."/>
            <person name="Bruce D."/>
            <person name="Han C."/>
            <person name="Tapia R."/>
            <person name="Gilna P."/>
            <person name="Schmutz J."/>
            <person name="Larimer F."/>
            <person name="Land M."/>
            <person name="Kyrpides N.C."/>
            <person name="Mavromatis K."/>
            <person name="Richardson P."/>
            <person name="Rohde M."/>
            <person name="Goeker M."/>
            <person name="Klenk H.P."/>
            <person name="Zhang Y."/>
            <person name="Roberts G.P."/>
            <person name="Reslewic S."/>
            <person name="Schwartz D.C."/>
        </authorList>
    </citation>
    <scope>NUCLEOTIDE SEQUENCE [LARGE SCALE GENOMIC DNA]</scope>
    <source>
        <strain>ATCC 11170 / ATH 1.1.1 / DSM 467 / LMG 4362 / NCIMB 8255 / S1</strain>
    </source>
</reference>
<sequence length="444" mass="48292">MSSVLVRFAPSPTGRLHLGNARVAVLNWLFAHAHGGAMVLRLDDTDIARGTAEFAQAIRDDLLWLGLTWTREESQLARAARHAEAVDQLKAAGRLYACYETPEELEYRRRRQRAQGLPPIYDRAGLALSAAERAALEAEGRKPHWRFRLDHEETSWLDLARGPCHAHGGHLSDPVLVREDGSLLYTLPSVVDDIDFAISHVIRGEDHVVNTAVQIQICRALGAEPPHYAHLPLVLTAEGGGLSKRDNALSLGDLRAQGIEPAAINALLAALGTAEAPDPLKSLDELAQGFRLDAFGRAAPRLDPADLVRLSARIYHALSPSEARARGIAVSDALWLALRANLTTLSDLDELLPVVEGEITPLIAEEDRAMIDEAARLLPETPWDATTWATWTAAVKTATGRKGKGLFMPLRRALTGVDHGPELAALLPLIGRDKALARLRGEKA</sequence>